<accession>Q72H91</accession>
<comment type="function">
    <text evidence="2">Probably involved in chromosome partitioning. Binds to a plasmid centromere-like site parS. Stimulates the ATPase activity 10-fold of Soj; the first 20 residues may be responsible.</text>
</comment>
<comment type="subunit">
    <text evidence="1">Homodimer, probably via the C-terminal 46 residues. Dimerization of the N-terminal H-T-H region may require DNA-binding. Probably interacts with ATPase Soj.</text>
</comment>
<comment type="similarity">
    <text evidence="3">Belongs to the ParB family.</text>
</comment>
<dbReference type="EMBL" id="AE017221">
    <property type="protein sequence ID" value="AAS81946.1"/>
    <property type="molecule type" value="Genomic_DNA"/>
</dbReference>
<dbReference type="RefSeq" id="WP_011173975.1">
    <property type="nucleotide sequence ID" value="NC_005835.1"/>
</dbReference>
<dbReference type="PDB" id="1VZ0">
    <property type="method" value="X-ray"/>
    <property type="resolution" value="2.30 A"/>
    <property type="chains" value="A/B/C/D/E/F/G/H=1-222"/>
</dbReference>
<dbReference type="PDBsum" id="1VZ0"/>
<dbReference type="SMR" id="Q72H91"/>
<dbReference type="KEGG" id="tth:TT_C1604"/>
<dbReference type="eggNOG" id="COG1475">
    <property type="taxonomic scope" value="Bacteria"/>
</dbReference>
<dbReference type="HOGENOM" id="CLU_023853_0_0_0"/>
<dbReference type="OrthoDB" id="9802051at2"/>
<dbReference type="EvolutionaryTrace" id="Q72H91"/>
<dbReference type="Proteomes" id="UP000000592">
    <property type="component" value="Chromosome"/>
</dbReference>
<dbReference type="GO" id="GO:0005694">
    <property type="term" value="C:chromosome"/>
    <property type="evidence" value="ECO:0007669"/>
    <property type="project" value="TreeGrafter"/>
</dbReference>
<dbReference type="GO" id="GO:0003677">
    <property type="term" value="F:DNA binding"/>
    <property type="evidence" value="ECO:0007669"/>
    <property type="project" value="UniProtKB-KW"/>
</dbReference>
<dbReference type="GO" id="GO:0007059">
    <property type="term" value="P:chromosome segregation"/>
    <property type="evidence" value="ECO:0007669"/>
    <property type="project" value="UniProtKB-KW"/>
</dbReference>
<dbReference type="GO" id="GO:0045881">
    <property type="term" value="P:positive regulation of sporulation resulting in formation of a cellular spore"/>
    <property type="evidence" value="ECO:0007669"/>
    <property type="project" value="TreeGrafter"/>
</dbReference>
<dbReference type="CDD" id="cd16393">
    <property type="entry name" value="SPO0J_N"/>
    <property type="match status" value="1"/>
</dbReference>
<dbReference type="FunFam" id="1.10.10.2830:FF:000001">
    <property type="entry name" value="Chromosome partitioning protein ParB"/>
    <property type="match status" value="1"/>
</dbReference>
<dbReference type="FunFam" id="3.90.1530.30:FF:000001">
    <property type="entry name" value="Chromosome partitioning protein ParB"/>
    <property type="match status" value="1"/>
</dbReference>
<dbReference type="Gene3D" id="1.10.10.2830">
    <property type="match status" value="1"/>
</dbReference>
<dbReference type="Gene3D" id="3.90.1530.30">
    <property type="match status" value="1"/>
</dbReference>
<dbReference type="InterPro" id="IPR050336">
    <property type="entry name" value="Chromosome_partition/occlusion"/>
</dbReference>
<dbReference type="InterPro" id="IPR041468">
    <property type="entry name" value="HTH_ParB/Spo0J"/>
</dbReference>
<dbReference type="InterPro" id="IPR004437">
    <property type="entry name" value="ParB/RepB/Spo0J"/>
</dbReference>
<dbReference type="InterPro" id="IPR003115">
    <property type="entry name" value="ParB/Sulfiredoxin_dom"/>
</dbReference>
<dbReference type="InterPro" id="IPR036086">
    <property type="entry name" value="ParB/Sulfiredoxin_sf"/>
</dbReference>
<dbReference type="InterPro" id="IPR057240">
    <property type="entry name" value="ParB_dimer_C"/>
</dbReference>
<dbReference type="NCBIfam" id="TIGR00180">
    <property type="entry name" value="parB_part"/>
    <property type="match status" value="1"/>
</dbReference>
<dbReference type="PANTHER" id="PTHR33375">
    <property type="entry name" value="CHROMOSOME-PARTITIONING PROTEIN PARB-RELATED"/>
    <property type="match status" value="1"/>
</dbReference>
<dbReference type="PANTHER" id="PTHR33375:SF1">
    <property type="entry name" value="CHROMOSOME-PARTITIONING PROTEIN PARB-RELATED"/>
    <property type="match status" value="1"/>
</dbReference>
<dbReference type="Pfam" id="PF17762">
    <property type="entry name" value="HTH_ParB"/>
    <property type="match status" value="1"/>
</dbReference>
<dbReference type="Pfam" id="PF23552">
    <property type="entry name" value="ParB_dimer"/>
    <property type="match status" value="1"/>
</dbReference>
<dbReference type="Pfam" id="PF02195">
    <property type="entry name" value="ParBc"/>
    <property type="match status" value="1"/>
</dbReference>
<dbReference type="SMART" id="SM00470">
    <property type="entry name" value="ParB"/>
    <property type="match status" value="1"/>
</dbReference>
<dbReference type="SUPFAM" id="SSF109709">
    <property type="entry name" value="KorB DNA-binding domain-like"/>
    <property type="match status" value="1"/>
</dbReference>
<dbReference type="SUPFAM" id="SSF110849">
    <property type="entry name" value="ParB/Sulfiredoxin"/>
    <property type="match status" value="1"/>
</dbReference>
<organism>
    <name type="scientific">Thermus thermophilus (strain ATCC BAA-163 / DSM 7039 / HB27)</name>
    <dbReference type="NCBI Taxonomy" id="262724"/>
    <lineage>
        <taxon>Bacteria</taxon>
        <taxon>Thermotogati</taxon>
        <taxon>Deinococcota</taxon>
        <taxon>Deinococci</taxon>
        <taxon>Thermales</taxon>
        <taxon>Thermaceae</taxon>
        <taxon>Thermus</taxon>
    </lineage>
</organism>
<evidence type="ECO:0000269" key="1">
    <source>
    </source>
</evidence>
<evidence type="ECO:0000269" key="2">
    <source>
    </source>
</evidence>
<evidence type="ECO:0000305" key="3"/>
<evidence type="ECO:0007829" key="4">
    <source>
        <dbReference type="PDB" id="1VZ0"/>
    </source>
</evidence>
<name>SP0J_THET2</name>
<feature type="chain" id="PRO_0000422778" description="Chromosome-partitioning protein Spo0J">
    <location>
        <begin position="1"/>
        <end position="269"/>
    </location>
</feature>
<feature type="DNA-binding region" description="H-T-H motif" evidence="3">
    <location>
        <begin position="137"/>
        <end position="156"/>
    </location>
</feature>
<feature type="region of interest" description="Stimulates ATPase activity of Soj by 8%">
    <location>
        <begin position="1"/>
        <end position="20"/>
    </location>
</feature>
<feature type="region of interest" description="Required for DNA-binding; may be responsible for dimerization">
    <location>
        <begin position="223"/>
        <end position="269"/>
    </location>
</feature>
<feature type="mutagenesis site" description="No longer stimulates ATPase activity of Soj, in the 1-20 peptide." evidence="2">
    <original>R</original>
    <variation>A</variation>
    <location>
        <position position="10"/>
    </location>
</feature>
<feature type="strand" evidence="4">
    <location>
        <begin position="24"/>
        <end position="27"/>
    </location>
</feature>
<feature type="helix" evidence="4">
    <location>
        <begin position="28"/>
        <end position="30"/>
    </location>
</feature>
<feature type="helix" evidence="4">
    <location>
        <begin position="38"/>
        <end position="57"/>
    </location>
</feature>
<feature type="strand" evidence="4">
    <location>
        <begin position="63"/>
        <end position="68"/>
    </location>
</feature>
<feature type="strand" evidence="4">
    <location>
        <begin position="71"/>
        <end position="76"/>
    </location>
</feature>
<feature type="helix" evidence="4">
    <location>
        <begin position="78"/>
        <end position="87"/>
    </location>
</feature>
<feature type="strand" evidence="4">
    <location>
        <begin position="90"/>
        <end position="96"/>
    </location>
</feature>
<feature type="helix" evidence="4">
    <location>
        <begin position="101"/>
        <end position="114"/>
    </location>
</feature>
<feature type="helix" evidence="4">
    <location>
        <begin position="120"/>
        <end position="132"/>
    </location>
</feature>
<feature type="helix" evidence="4">
    <location>
        <begin position="137"/>
        <end position="144"/>
    </location>
</feature>
<feature type="helix" evidence="4">
    <location>
        <begin position="148"/>
        <end position="156"/>
    </location>
</feature>
<feature type="helix" evidence="4">
    <location>
        <begin position="157"/>
        <end position="159"/>
    </location>
</feature>
<feature type="helix" evidence="4">
    <location>
        <begin position="162"/>
        <end position="169"/>
    </location>
</feature>
<feature type="helix" evidence="4">
    <location>
        <begin position="175"/>
        <end position="182"/>
    </location>
</feature>
<feature type="helix" evidence="4">
    <location>
        <begin position="186"/>
        <end position="188"/>
    </location>
</feature>
<feature type="helix" evidence="4">
    <location>
        <begin position="189"/>
        <end position="198"/>
    </location>
</feature>
<feature type="helix" evidence="4">
    <location>
        <begin position="203"/>
        <end position="206"/>
    </location>
</feature>
<feature type="helix" evidence="4">
    <location>
        <begin position="211"/>
        <end position="213"/>
    </location>
</feature>
<protein>
    <recommendedName>
        <fullName>Chromosome-partitioning protein Spo0J</fullName>
    </recommendedName>
</protein>
<reference key="1">
    <citation type="journal article" date="2004" name="Nat. Biotechnol.">
        <title>The genome sequence of the extreme thermophile Thermus thermophilus.</title>
        <authorList>
            <person name="Henne A."/>
            <person name="Brueggemann H."/>
            <person name="Raasch C."/>
            <person name="Wiezer A."/>
            <person name="Hartsch T."/>
            <person name="Liesegang H."/>
            <person name="Johann A."/>
            <person name="Lienard T."/>
            <person name="Gohl O."/>
            <person name="Martinez-Arias R."/>
            <person name="Jacobi C."/>
            <person name="Starkuviene V."/>
            <person name="Schlenczeck S."/>
            <person name="Dencker S."/>
            <person name="Huber R."/>
            <person name="Klenk H.-P."/>
            <person name="Kramer W."/>
            <person name="Merkl R."/>
            <person name="Gottschalk G."/>
            <person name="Fritz H.-J."/>
        </authorList>
    </citation>
    <scope>NUCLEOTIDE SEQUENCE [LARGE SCALE GENOMIC DNA]</scope>
    <source>
        <strain>ATCC BAA-163 / DSM 7039 / HB27</strain>
    </source>
</reference>
<reference key="2">
    <citation type="journal article" date="2005" name="EMBO J.">
        <title>Bacterial chromosome segregation: structure and DNA binding of the Soj dimer--a conserved biological switch.</title>
        <authorList>
            <person name="Leonard T.A."/>
            <person name="Butler P.J."/>
            <person name="Lowe J."/>
        </authorList>
    </citation>
    <scope>FUNCTION</scope>
    <scope>MUTAGENESIS OF ARG-10</scope>
    <source>
        <strain>ATCC BAA-163 / DSM 7039 / HB27</strain>
    </source>
</reference>
<reference key="3">
    <citation type="journal article" date="2004" name="Mol. Microbiol.">
        <title>Structural analysis of the chromosome segregation protein Spo0J from Thermus thermophilus.</title>
        <authorList>
            <person name="Leonard T.A."/>
            <person name="Butler P.J."/>
            <person name="Lowe J."/>
        </authorList>
    </citation>
    <scope>X-RAY CRYSTALLOGRAPHY (2.30 ANGSTROMS) OF 1-222</scope>
    <scope>SUBUNIT</scope>
    <scope>DNA-BINDING</scope>
    <source>
        <strain>ATCC BAA-163 / DSM 7039 / HB27</strain>
    </source>
</reference>
<gene>
    <name type="primary">spo0C</name>
    <name type="synonym">parB</name>
    <name type="ordered locus">TT_C1604</name>
</gene>
<keyword id="KW-0002">3D-structure</keyword>
<keyword id="KW-0159">Chromosome partition</keyword>
<keyword id="KW-0238">DNA-binding</keyword>
<sequence length="269" mass="29751">MSRKPSGLGRGLEALLPKTGAGVVRLPLASIRPNPRQPRKRFAEESLKELADSIREKGLLQPLLVRPQGDGYELVAGERRYRAALMAGLQEVPAVVKDLTDREALELALVENLQREDLSPVEEARGYQALLEMGLTQEEVARRVGKARSTVANALRLLQLPPEALEALERGEITAGHARALLMLEPEDRLWGLKEILEKGLSVRQAEALRERLAMAPKRSAEPSPLSLELSRHLGLPVRVVGGKKGKVVIQYRSLEELEALLRRLGYQA</sequence>
<proteinExistence type="evidence at protein level"/>